<keyword id="KW-0012">Acyltransferase</keyword>
<keyword id="KW-0963">Cytoplasm</keyword>
<keyword id="KW-1185">Reference proteome</keyword>
<keyword id="KW-0808">Transferase</keyword>
<evidence type="ECO:0000255" key="1">
    <source>
        <dbReference type="HAMAP-Rule" id="MF_00013"/>
    </source>
</evidence>
<evidence type="ECO:0000255" key="2">
    <source>
        <dbReference type="PROSITE-ProRule" id="PRU01067"/>
    </source>
</evidence>
<organism>
    <name type="scientific">Psychrobacter arcticus (strain DSM 17307 / VKM B-2377 / 273-4)</name>
    <dbReference type="NCBI Taxonomy" id="259536"/>
    <lineage>
        <taxon>Bacteria</taxon>
        <taxon>Pseudomonadati</taxon>
        <taxon>Pseudomonadota</taxon>
        <taxon>Gammaproteobacteria</taxon>
        <taxon>Moraxellales</taxon>
        <taxon>Moraxellaceae</taxon>
        <taxon>Psychrobacter</taxon>
    </lineage>
</organism>
<proteinExistence type="inferred from homology"/>
<gene>
    <name evidence="1" type="primary">lipB</name>
    <name type="ordered locus">Psyc_1295</name>
</gene>
<name>LIPB_PSYA2</name>
<comment type="function">
    <text evidence="1">Catalyzes the transfer of endogenously produced octanoic acid from octanoyl-acyl-carrier-protein onto the lipoyl domains of lipoate-dependent enzymes. Lipoyl-ACP can also act as a substrate although octanoyl-ACP is likely to be the physiological substrate.</text>
</comment>
<comment type="catalytic activity">
    <reaction evidence="1">
        <text>octanoyl-[ACP] + L-lysyl-[protein] = N(6)-octanoyl-L-lysyl-[protein] + holo-[ACP] + H(+)</text>
        <dbReference type="Rhea" id="RHEA:17665"/>
        <dbReference type="Rhea" id="RHEA-COMP:9636"/>
        <dbReference type="Rhea" id="RHEA-COMP:9685"/>
        <dbReference type="Rhea" id="RHEA-COMP:9752"/>
        <dbReference type="Rhea" id="RHEA-COMP:9928"/>
        <dbReference type="ChEBI" id="CHEBI:15378"/>
        <dbReference type="ChEBI" id="CHEBI:29969"/>
        <dbReference type="ChEBI" id="CHEBI:64479"/>
        <dbReference type="ChEBI" id="CHEBI:78463"/>
        <dbReference type="ChEBI" id="CHEBI:78809"/>
        <dbReference type="EC" id="2.3.1.181"/>
    </reaction>
</comment>
<comment type="pathway">
    <text evidence="1">Protein modification; protein lipoylation via endogenous pathway; protein N(6)-(lipoyl)lysine from octanoyl-[acyl-carrier-protein]: step 1/2.</text>
</comment>
<comment type="subcellular location">
    <subcellularLocation>
        <location evidence="1">Cytoplasm</location>
    </subcellularLocation>
</comment>
<comment type="miscellaneous">
    <text evidence="1">In the reaction, the free carboxyl group of octanoic acid is attached via an amide linkage to the epsilon-amino group of a specific lysine residue of lipoyl domains of lipoate-dependent enzymes.</text>
</comment>
<comment type="similarity">
    <text evidence="1">Belongs to the LipB family.</text>
</comment>
<dbReference type="EC" id="2.3.1.181" evidence="1"/>
<dbReference type="EMBL" id="CP000082">
    <property type="protein sequence ID" value="AAZ19145.1"/>
    <property type="molecule type" value="Genomic_DNA"/>
</dbReference>
<dbReference type="RefSeq" id="WP_011280567.1">
    <property type="nucleotide sequence ID" value="NC_007204.1"/>
</dbReference>
<dbReference type="SMR" id="Q4FS63"/>
<dbReference type="STRING" id="259536.Psyc_1295"/>
<dbReference type="KEGG" id="par:Psyc_1295"/>
<dbReference type="eggNOG" id="COG0321">
    <property type="taxonomic scope" value="Bacteria"/>
</dbReference>
<dbReference type="HOGENOM" id="CLU_035168_3_1_6"/>
<dbReference type="OrthoDB" id="9787061at2"/>
<dbReference type="UniPathway" id="UPA00538">
    <property type="reaction ID" value="UER00592"/>
</dbReference>
<dbReference type="Proteomes" id="UP000000546">
    <property type="component" value="Chromosome"/>
</dbReference>
<dbReference type="GO" id="GO:0005737">
    <property type="term" value="C:cytoplasm"/>
    <property type="evidence" value="ECO:0007669"/>
    <property type="project" value="UniProtKB-SubCell"/>
</dbReference>
<dbReference type="GO" id="GO:0033819">
    <property type="term" value="F:lipoyl(octanoyl) transferase activity"/>
    <property type="evidence" value="ECO:0007669"/>
    <property type="project" value="UniProtKB-EC"/>
</dbReference>
<dbReference type="GO" id="GO:0036211">
    <property type="term" value="P:protein modification process"/>
    <property type="evidence" value="ECO:0007669"/>
    <property type="project" value="InterPro"/>
</dbReference>
<dbReference type="CDD" id="cd16444">
    <property type="entry name" value="LipB"/>
    <property type="match status" value="1"/>
</dbReference>
<dbReference type="Gene3D" id="3.30.930.10">
    <property type="entry name" value="Bira Bifunctional Protein, Domain 2"/>
    <property type="match status" value="1"/>
</dbReference>
<dbReference type="HAMAP" id="MF_00013">
    <property type="entry name" value="LipB"/>
    <property type="match status" value="1"/>
</dbReference>
<dbReference type="InterPro" id="IPR045864">
    <property type="entry name" value="aa-tRNA-synth_II/BPL/LPL"/>
</dbReference>
<dbReference type="InterPro" id="IPR004143">
    <property type="entry name" value="BPL_LPL_catalytic"/>
</dbReference>
<dbReference type="InterPro" id="IPR000544">
    <property type="entry name" value="Octanoyltransferase"/>
</dbReference>
<dbReference type="InterPro" id="IPR020605">
    <property type="entry name" value="Octanoyltransferase_CS"/>
</dbReference>
<dbReference type="PANTHER" id="PTHR10993:SF7">
    <property type="entry name" value="LIPOYLTRANSFERASE 2, MITOCHONDRIAL-RELATED"/>
    <property type="match status" value="1"/>
</dbReference>
<dbReference type="PANTHER" id="PTHR10993">
    <property type="entry name" value="OCTANOYLTRANSFERASE"/>
    <property type="match status" value="1"/>
</dbReference>
<dbReference type="Pfam" id="PF21948">
    <property type="entry name" value="LplA-B_cat"/>
    <property type="match status" value="1"/>
</dbReference>
<dbReference type="PIRSF" id="PIRSF016262">
    <property type="entry name" value="LPLase"/>
    <property type="match status" value="1"/>
</dbReference>
<dbReference type="SUPFAM" id="SSF55681">
    <property type="entry name" value="Class II aaRS and biotin synthetases"/>
    <property type="match status" value="1"/>
</dbReference>
<dbReference type="PROSITE" id="PS51733">
    <property type="entry name" value="BPL_LPL_CATALYTIC"/>
    <property type="match status" value="1"/>
</dbReference>
<dbReference type="PROSITE" id="PS01313">
    <property type="entry name" value="LIPB"/>
    <property type="match status" value="1"/>
</dbReference>
<reference key="1">
    <citation type="journal article" date="2010" name="Appl. Environ. Microbiol.">
        <title>The genome sequence of Psychrobacter arcticus 273-4, a psychroactive Siberian permafrost bacterium, reveals mechanisms for adaptation to low-temperature growth.</title>
        <authorList>
            <person name="Ayala-del-Rio H.L."/>
            <person name="Chain P.S."/>
            <person name="Grzymski J.J."/>
            <person name="Ponder M.A."/>
            <person name="Ivanova N."/>
            <person name="Bergholz P.W."/>
            <person name="Di Bartolo G."/>
            <person name="Hauser L."/>
            <person name="Land M."/>
            <person name="Bakermans C."/>
            <person name="Rodrigues D."/>
            <person name="Klappenbach J."/>
            <person name="Zarka D."/>
            <person name="Larimer F."/>
            <person name="Richardson P."/>
            <person name="Murray A."/>
            <person name="Thomashow M."/>
            <person name="Tiedje J.M."/>
        </authorList>
    </citation>
    <scope>NUCLEOTIDE SEQUENCE [LARGE SCALE GENOMIC DNA]</scope>
    <source>
        <strain>DSM 17307 / VKM B-2377 / 273-4</strain>
    </source>
</reference>
<feature type="chain" id="PRO_0000242750" description="Octanoyltransferase">
    <location>
        <begin position="1"/>
        <end position="286"/>
    </location>
</feature>
<feature type="domain" description="BPL/LPL catalytic" evidence="2">
    <location>
        <begin position="50"/>
        <end position="278"/>
    </location>
</feature>
<feature type="active site" description="Acyl-thioester intermediate" evidence="1">
    <location>
        <position position="221"/>
    </location>
</feature>
<feature type="binding site" evidence="1">
    <location>
        <begin position="89"/>
        <end position="96"/>
    </location>
    <ligand>
        <name>substrate</name>
    </ligand>
</feature>
<feature type="binding site" evidence="1">
    <location>
        <begin position="190"/>
        <end position="192"/>
    </location>
    <ligand>
        <name>substrate</name>
    </ligand>
</feature>
<feature type="binding site" evidence="1">
    <location>
        <begin position="203"/>
        <end position="205"/>
    </location>
    <ligand>
        <name>substrate</name>
    </ligand>
</feature>
<feature type="site" description="Lowers pKa of active site Cys" evidence="1">
    <location>
        <position position="187"/>
    </location>
</feature>
<protein>
    <recommendedName>
        <fullName evidence="1">Octanoyltransferase</fullName>
        <ecNumber evidence="1">2.3.1.181</ecNumber>
    </recommendedName>
    <alternativeName>
        <fullName evidence="1">Lipoate-protein ligase B</fullName>
    </alternativeName>
    <alternativeName>
        <fullName evidence="1">Lipoyl/octanoyl transferase</fullName>
    </alternativeName>
    <alternativeName>
        <fullName evidence="1">Octanoyl-[acyl-carrier-protein]-protein N-octanoyltransferase</fullName>
    </alternativeName>
</protein>
<accession>Q4FS63</accession>
<sequence length="286" mass="31697">MPNTMQALNTQPLNDTLITKSITAADYVPTLDAMLSRTLARIALKKEQGLRTPDELWIVDHNDVYTLGQAGKEEHILQRTNTPIIKTDRGGQVTWHGHGQLVMYWLFDLDSVGWSVRNMVSHAEQAIEDVVNDCLKSPASTDTIHISARARRDAPGVYIYADTAAEIDSAHRSTDEIKVDNTIMIGKIASLGFKIKHGFSYHGVAINLNCDLSAFNAINPCGYAGMQMLRLADFVNMNQATTPQPNNPTLTDDAKTITYEQFTQKLIDNIAQRHAGVIPLRELAPK</sequence>